<comment type="similarity">
    <text evidence="2">Belongs to the hssA/B family.</text>
</comment>
<keyword id="KW-1185">Reference proteome</keyword>
<dbReference type="EMBL" id="AAFI02000218">
    <property type="protein sequence ID" value="EAL60650.1"/>
    <property type="molecule type" value="Genomic_DNA"/>
</dbReference>
<dbReference type="RefSeq" id="XP_629090.1">
    <property type="nucleotide sequence ID" value="XM_629088.1"/>
</dbReference>
<dbReference type="PaxDb" id="44689-DDB0252787"/>
<dbReference type="EnsemblProtists" id="EAL60650">
    <property type="protein sequence ID" value="EAL60650"/>
    <property type="gene ID" value="DDB_G0293676"/>
</dbReference>
<dbReference type="GeneID" id="8629383"/>
<dbReference type="KEGG" id="ddi:DDB_G0293676"/>
<dbReference type="dictyBase" id="DDB_G0293676"/>
<dbReference type="HOGENOM" id="CLU_181850_0_0_1"/>
<dbReference type="InParanoid" id="Q54BD9"/>
<dbReference type="PRO" id="PR:Q54BD9"/>
<dbReference type="Proteomes" id="UP000002195">
    <property type="component" value="Chromosome 6"/>
</dbReference>
<dbReference type="GO" id="GO:0030587">
    <property type="term" value="P:sorocarp development"/>
    <property type="evidence" value="ECO:0000318"/>
    <property type="project" value="GO_Central"/>
</dbReference>
<dbReference type="InterPro" id="IPR050533">
    <property type="entry name" value="HssA/B-like_chaperone"/>
</dbReference>
<dbReference type="InterPro" id="IPR008455">
    <property type="entry name" value="HssA/B-related"/>
</dbReference>
<dbReference type="PANTHER" id="PTHR31059">
    <property type="entry name" value="HSSA/B-LIKE PROTEIN 1-RELATED-RELATED"/>
    <property type="match status" value="1"/>
</dbReference>
<dbReference type="PANTHER" id="PTHR31059:SF5">
    <property type="entry name" value="HSSA_B-LIKE PROTEIN 1-RELATED"/>
    <property type="match status" value="1"/>
</dbReference>
<dbReference type="Pfam" id="PF05710">
    <property type="entry name" value="Coiled"/>
    <property type="match status" value="1"/>
</dbReference>
<sequence>MTLFSSISSMSSSMTSSKSSFASFGNGTRVSSNSIACSVDCDGKGVSSGSDLTGGAKSGGDCGGKGRPNNHGHGHENCHGGKGPGNSC</sequence>
<name>HSL64_DICDI</name>
<protein>
    <recommendedName>
        <fullName>HssA/B-like protein 64</fullName>
    </recommendedName>
</protein>
<evidence type="ECO:0000256" key="1">
    <source>
        <dbReference type="SAM" id="MobiDB-lite"/>
    </source>
</evidence>
<evidence type="ECO:0000305" key="2"/>
<accession>Q54BD9</accession>
<proteinExistence type="inferred from homology"/>
<gene>
    <name type="primary">hssl64</name>
    <name type="ORF">DDB_G0293676</name>
</gene>
<feature type="chain" id="PRO_0000330432" description="HssA/B-like protein 64">
    <location>
        <begin position="1"/>
        <end position="88"/>
    </location>
</feature>
<feature type="region of interest" description="Disordered" evidence="1">
    <location>
        <begin position="1"/>
        <end position="25"/>
    </location>
</feature>
<feature type="region of interest" description="Disordered" evidence="1">
    <location>
        <begin position="45"/>
        <end position="88"/>
    </location>
</feature>
<feature type="compositionally biased region" description="Low complexity" evidence="1">
    <location>
        <begin position="1"/>
        <end position="24"/>
    </location>
</feature>
<feature type="compositionally biased region" description="Gly residues" evidence="1">
    <location>
        <begin position="56"/>
        <end position="66"/>
    </location>
</feature>
<organism>
    <name type="scientific">Dictyostelium discoideum</name>
    <name type="common">Social amoeba</name>
    <dbReference type="NCBI Taxonomy" id="44689"/>
    <lineage>
        <taxon>Eukaryota</taxon>
        <taxon>Amoebozoa</taxon>
        <taxon>Evosea</taxon>
        <taxon>Eumycetozoa</taxon>
        <taxon>Dictyostelia</taxon>
        <taxon>Dictyosteliales</taxon>
        <taxon>Dictyosteliaceae</taxon>
        <taxon>Dictyostelium</taxon>
    </lineage>
</organism>
<reference key="1">
    <citation type="journal article" date="2005" name="Nature">
        <title>The genome of the social amoeba Dictyostelium discoideum.</title>
        <authorList>
            <person name="Eichinger L."/>
            <person name="Pachebat J.A."/>
            <person name="Gloeckner G."/>
            <person name="Rajandream M.A."/>
            <person name="Sucgang R."/>
            <person name="Berriman M."/>
            <person name="Song J."/>
            <person name="Olsen R."/>
            <person name="Szafranski K."/>
            <person name="Xu Q."/>
            <person name="Tunggal B."/>
            <person name="Kummerfeld S."/>
            <person name="Madera M."/>
            <person name="Konfortov B.A."/>
            <person name="Rivero F."/>
            <person name="Bankier A.T."/>
            <person name="Lehmann R."/>
            <person name="Hamlin N."/>
            <person name="Davies R."/>
            <person name="Gaudet P."/>
            <person name="Fey P."/>
            <person name="Pilcher K."/>
            <person name="Chen G."/>
            <person name="Saunders D."/>
            <person name="Sodergren E.J."/>
            <person name="Davis P."/>
            <person name="Kerhornou A."/>
            <person name="Nie X."/>
            <person name="Hall N."/>
            <person name="Anjard C."/>
            <person name="Hemphill L."/>
            <person name="Bason N."/>
            <person name="Farbrother P."/>
            <person name="Desany B."/>
            <person name="Just E."/>
            <person name="Morio T."/>
            <person name="Rost R."/>
            <person name="Churcher C.M."/>
            <person name="Cooper J."/>
            <person name="Haydock S."/>
            <person name="van Driessche N."/>
            <person name="Cronin A."/>
            <person name="Goodhead I."/>
            <person name="Muzny D.M."/>
            <person name="Mourier T."/>
            <person name="Pain A."/>
            <person name="Lu M."/>
            <person name="Harper D."/>
            <person name="Lindsay R."/>
            <person name="Hauser H."/>
            <person name="James K.D."/>
            <person name="Quiles M."/>
            <person name="Madan Babu M."/>
            <person name="Saito T."/>
            <person name="Buchrieser C."/>
            <person name="Wardroper A."/>
            <person name="Felder M."/>
            <person name="Thangavelu M."/>
            <person name="Johnson D."/>
            <person name="Knights A."/>
            <person name="Loulseged H."/>
            <person name="Mungall K.L."/>
            <person name="Oliver K."/>
            <person name="Price C."/>
            <person name="Quail M.A."/>
            <person name="Urushihara H."/>
            <person name="Hernandez J."/>
            <person name="Rabbinowitsch E."/>
            <person name="Steffen D."/>
            <person name="Sanders M."/>
            <person name="Ma J."/>
            <person name="Kohara Y."/>
            <person name="Sharp S."/>
            <person name="Simmonds M.N."/>
            <person name="Spiegler S."/>
            <person name="Tivey A."/>
            <person name="Sugano S."/>
            <person name="White B."/>
            <person name="Walker D."/>
            <person name="Woodward J.R."/>
            <person name="Winckler T."/>
            <person name="Tanaka Y."/>
            <person name="Shaulsky G."/>
            <person name="Schleicher M."/>
            <person name="Weinstock G.M."/>
            <person name="Rosenthal A."/>
            <person name="Cox E.C."/>
            <person name="Chisholm R.L."/>
            <person name="Gibbs R.A."/>
            <person name="Loomis W.F."/>
            <person name="Platzer M."/>
            <person name="Kay R.R."/>
            <person name="Williams J.G."/>
            <person name="Dear P.H."/>
            <person name="Noegel A.A."/>
            <person name="Barrell B.G."/>
            <person name="Kuspa A."/>
        </authorList>
    </citation>
    <scope>NUCLEOTIDE SEQUENCE [LARGE SCALE GENOMIC DNA]</scope>
    <source>
        <strain>AX4</strain>
    </source>
</reference>